<reference key="1">
    <citation type="journal article" date="2003" name="J. Bacteriol.">
        <title>Complete genome sequence of the ammonia-oxidizing bacterium and obligate chemolithoautotroph Nitrosomonas europaea.</title>
        <authorList>
            <person name="Chain P."/>
            <person name="Lamerdin J.E."/>
            <person name="Larimer F.W."/>
            <person name="Regala W."/>
            <person name="Lao V."/>
            <person name="Land M.L."/>
            <person name="Hauser L."/>
            <person name="Hooper A.B."/>
            <person name="Klotz M.G."/>
            <person name="Norton J."/>
            <person name="Sayavedra-Soto L.A."/>
            <person name="Arciero D.M."/>
            <person name="Hommes N.G."/>
            <person name="Whittaker M.M."/>
            <person name="Arp D.J."/>
        </authorList>
    </citation>
    <scope>NUCLEOTIDE SEQUENCE [LARGE SCALE GENOMIC DNA]</scope>
    <source>
        <strain>ATCC 19718 / CIP 103999 / KCTC 2705 / NBRC 14298</strain>
    </source>
</reference>
<evidence type="ECO:0000255" key="1">
    <source>
        <dbReference type="HAMAP-Rule" id="MF_00113"/>
    </source>
</evidence>
<feature type="chain" id="PRO_0000165418" description="S-adenosylmethionine:tRNA ribosyltransferase-isomerase">
    <location>
        <begin position="1"/>
        <end position="353"/>
    </location>
</feature>
<name>QUEA_NITEU</name>
<gene>
    <name evidence="1" type="primary">queA</name>
    <name type="ordered locus">NE1140</name>
</gene>
<keyword id="KW-0963">Cytoplasm</keyword>
<keyword id="KW-0671">Queuosine biosynthesis</keyword>
<keyword id="KW-1185">Reference proteome</keyword>
<keyword id="KW-0949">S-adenosyl-L-methionine</keyword>
<keyword id="KW-0808">Transferase</keyword>
<protein>
    <recommendedName>
        <fullName evidence="1">S-adenosylmethionine:tRNA ribosyltransferase-isomerase</fullName>
        <ecNumber evidence="1">2.4.99.17</ecNumber>
    </recommendedName>
    <alternativeName>
        <fullName evidence="1">Queuosine biosynthesis protein QueA</fullName>
    </alternativeName>
</protein>
<organism>
    <name type="scientific">Nitrosomonas europaea (strain ATCC 19718 / CIP 103999 / KCTC 2705 / NBRC 14298)</name>
    <dbReference type="NCBI Taxonomy" id="228410"/>
    <lineage>
        <taxon>Bacteria</taxon>
        <taxon>Pseudomonadati</taxon>
        <taxon>Pseudomonadota</taxon>
        <taxon>Betaproteobacteria</taxon>
        <taxon>Nitrosomonadales</taxon>
        <taxon>Nitrosomonadaceae</taxon>
        <taxon>Nitrosomonas</taxon>
    </lineage>
</organism>
<proteinExistence type="inferred from homology"/>
<dbReference type="EC" id="2.4.99.17" evidence="1"/>
<dbReference type="EMBL" id="AL954747">
    <property type="protein sequence ID" value="CAD85051.1"/>
    <property type="molecule type" value="Genomic_DNA"/>
</dbReference>
<dbReference type="SMR" id="Q82VF1"/>
<dbReference type="STRING" id="228410.NE1140"/>
<dbReference type="KEGG" id="neu:NE1140"/>
<dbReference type="eggNOG" id="COG0809">
    <property type="taxonomic scope" value="Bacteria"/>
</dbReference>
<dbReference type="HOGENOM" id="CLU_039110_1_0_4"/>
<dbReference type="PhylomeDB" id="Q82VF1"/>
<dbReference type="UniPathway" id="UPA00392"/>
<dbReference type="Proteomes" id="UP000001416">
    <property type="component" value="Chromosome"/>
</dbReference>
<dbReference type="GO" id="GO:0005737">
    <property type="term" value="C:cytoplasm"/>
    <property type="evidence" value="ECO:0007669"/>
    <property type="project" value="UniProtKB-SubCell"/>
</dbReference>
<dbReference type="GO" id="GO:0051075">
    <property type="term" value="F:S-adenosylmethionine:tRNA ribosyltransferase-isomerase activity"/>
    <property type="evidence" value="ECO:0007669"/>
    <property type="project" value="UniProtKB-EC"/>
</dbReference>
<dbReference type="GO" id="GO:0008616">
    <property type="term" value="P:queuosine biosynthetic process"/>
    <property type="evidence" value="ECO:0007669"/>
    <property type="project" value="UniProtKB-UniRule"/>
</dbReference>
<dbReference type="GO" id="GO:0002099">
    <property type="term" value="P:tRNA wobble guanine modification"/>
    <property type="evidence" value="ECO:0007669"/>
    <property type="project" value="TreeGrafter"/>
</dbReference>
<dbReference type="FunFam" id="3.40.1780.10:FF:000001">
    <property type="entry name" value="S-adenosylmethionine:tRNA ribosyltransferase-isomerase"/>
    <property type="match status" value="1"/>
</dbReference>
<dbReference type="Gene3D" id="2.40.10.240">
    <property type="entry name" value="QueA-like"/>
    <property type="match status" value="1"/>
</dbReference>
<dbReference type="Gene3D" id="3.40.1780.10">
    <property type="entry name" value="QueA-like"/>
    <property type="match status" value="1"/>
</dbReference>
<dbReference type="HAMAP" id="MF_00113">
    <property type="entry name" value="QueA"/>
    <property type="match status" value="1"/>
</dbReference>
<dbReference type="InterPro" id="IPR003699">
    <property type="entry name" value="QueA"/>
</dbReference>
<dbReference type="InterPro" id="IPR042118">
    <property type="entry name" value="QueA_dom1"/>
</dbReference>
<dbReference type="InterPro" id="IPR042119">
    <property type="entry name" value="QueA_dom2"/>
</dbReference>
<dbReference type="InterPro" id="IPR036100">
    <property type="entry name" value="QueA_sf"/>
</dbReference>
<dbReference type="NCBIfam" id="NF001140">
    <property type="entry name" value="PRK00147.1"/>
    <property type="match status" value="1"/>
</dbReference>
<dbReference type="NCBIfam" id="TIGR00113">
    <property type="entry name" value="queA"/>
    <property type="match status" value="1"/>
</dbReference>
<dbReference type="PANTHER" id="PTHR30307">
    <property type="entry name" value="S-ADENOSYLMETHIONINE:TRNA RIBOSYLTRANSFERASE-ISOMERASE"/>
    <property type="match status" value="1"/>
</dbReference>
<dbReference type="PANTHER" id="PTHR30307:SF0">
    <property type="entry name" value="S-ADENOSYLMETHIONINE:TRNA RIBOSYLTRANSFERASE-ISOMERASE"/>
    <property type="match status" value="1"/>
</dbReference>
<dbReference type="Pfam" id="PF02547">
    <property type="entry name" value="Queuosine_synth"/>
    <property type="match status" value="1"/>
</dbReference>
<dbReference type="SUPFAM" id="SSF111337">
    <property type="entry name" value="QueA-like"/>
    <property type="match status" value="1"/>
</dbReference>
<comment type="function">
    <text evidence="1">Transfers and isomerizes the ribose moiety from AdoMet to the 7-aminomethyl group of 7-deazaguanine (preQ1-tRNA) to give epoxyqueuosine (oQ-tRNA).</text>
</comment>
<comment type="catalytic activity">
    <reaction evidence="1">
        <text>7-aminomethyl-7-carbaguanosine(34) in tRNA + S-adenosyl-L-methionine = epoxyqueuosine(34) in tRNA + adenine + L-methionine + 2 H(+)</text>
        <dbReference type="Rhea" id="RHEA:32155"/>
        <dbReference type="Rhea" id="RHEA-COMP:10342"/>
        <dbReference type="Rhea" id="RHEA-COMP:18582"/>
        <dbReference type="ChEBI" id="CHEBI:15378"/>
        <dbReference type="ChEBI" id="CHEBI:16708"/>
        <dbReference type="ChEBI" id="CHEBI:57844"/>
        <dbReference type="ChEBI" id="CHEBI:59789"/>
        <dbReference type="ChEBI" id="CHEBI:82833"/>
        <dbReference type="ChEBI" id="CHEBI:194443"/>
        <dbReference type="EC" id="2.4.99.17"/>
    </reaction>
</comment>
<comment type="pathway">
    <text evidence="1">tRNA modification; tRNA-queuosine biosynthesis.</text>
</comment>
<comment type="subunit">
    <text evidence="1">Monomer.</text>
</comment>
<comment type="subcellular location">
    <subcellularLocation>
        <location evidence="1">Cytoplasm</location>
    </subcellularLocation>
</comment>
<comment type="similarity">
    <text evidence="1">Belongs to the QueA family.</text>
</comment>
<sequence length="353" mass="39287">MLAIGIIRSMKTDDFDFHLPDELIAQFPLANRSDSRMLYVNGKHADLRDAAFRNLPDYLKRGDVIVLNNTRVVKARLSGVKSTGGKVEVMVERILDTHRARVLIRASHALVIGSTLLLENKITAQVEAREQDIYTLCFMHSLPLIELLDQFGHTPLPPYIGRNATVSDENRYQTVFAQESGAVAAPTAGLHFDETMLQTLRTLGVKIIYVTLHVGAGTFQPVRVQNIDQHVMHTEPYHIPTETVEAIQMCKSAGGSVLAVGTTSLRALESCMLTNDGTLVAGAGETNLFITPGFRFRIVDRLLTNFHLPRSTLLMLVSAFAGMETIRHAYRHAIDNHYRFFSYGDAMLIDSQP</sequence>
<accession>Q82VF1</accession>